<proteinExistence type="inferred from homology"/>
<reference key="1">
    <citation type="journal article" date="1999" name="Virology">
        <title>Isolation and characterization of APSE-1, a bacteriophage infecting the secondary endosymbiont of acyrthosiphon pisum.</title>
        <authorList>
            <person name="van der Wilk F."/>
            <person name="Dullemans A.M."/>
            <person name="Verbeek M."/>
            <person name="van den Heuvel J.F.J.M."/>
        </authorList>
    </citation>
    <scope>NUCLEOTIDE SEQUENCE [LARGE SCALE GENOMIC DNA]</scope>
</reference>
<organism>
    <name type="scientific">Acyrthosiphon pisum secondary endosymbiont phage 1</name>
    <name type="common">Bacteriophage APSE-1</name>
    <dbReference type="NCBI Taxonomy" id="2682836"/>
    <lineage>
        <taxon>Viruses</taxon>
        <taxon>Duplodnaviria</taxon>
        <taxon>Heunggongvirae</taxon>
        <taxon>Uroviricota</taxon>
        <taxon>Caudoviricetes</taxon>
        <taxon>Sendosyvirus</taxon>
        <taxon>Sendosyvirus APSE1</taxon>
    </lineage>
</organism>
<feature type="chain" id="PRO_0000077652" description="Putative lysis protein S">
    <location>
        <begin position="1"/>
        <end position="94"/>
    </location>
</feature>
<evidence type="ECO:0000250" key="1"/>
<evidence type="ECO:0000305" key="2"/>
<sequence>MSEFCKPLLDILRHQGTCAALAFIMALLRARYHRKDFYRSLLDALMCAMLGGVAHELLQFLGLKADYSWLASVAIGYLGVDRIGNWLKKKTGKL</sequence>
<name>VLYS_BPAPS</name>
<gene>
    <name type="primary">11</name>
</gene>
<accession>Q9T1T7</accession>
<dbReference type="EMBL" id="AF157835">
    <property type="protein sequence ID" value="AAF03954.1"/>
    <property type="molecule type" value="Genomic_DNA"/>
</dbReference>
<dbReference type="RefSeq" id="NP_050972.1">
    <property type="nucleotide sequence ID" value="NC_000935.1"/>
</dbReference>
<dbReference type="SMR" id="Q9T1T7"/>
<dbReference type="KEGG" id="vg:1262305"/>
<dbReference type="Proteomes" id="UP000000853">
    <property type="component" value="Genome"/>
</dbReference>
<dbReference type="GO" id="GO:0031640">
    <property type="term" value="P:killing of cells of another organism"/>
    <property type="evidence" value="ECO:0007669"/>
    <property type="project" value="UniProtKB-KW"/>
</dbReference>
<dbReference type="InterPro" id="IPR006481">
    <property type="entry name" value="Phage_lambda_GpS_holin"/>
</dbReference>
<dbReference type="NCBIfam" id="TIGR01594">
    <property type="entry name" value="holin_lambda"/>
    <property type="match status" value="1"/>
</dbReference>
<dbReference type="Pfam" id="PF05106">
    <property type="entry name" value="Phage_holin_3_1"/>
    <property type="match status" value="1"/>
</dbReference>
<keyword id="KW-0204">Cytolysis</keyword>
<keyword id="KW-0578">Host cell lysis by virus</keyword>
<keyword id="KW-1185">Reference proteome</keyword>
<keyword id="KW-1188">Viral release from host cell</keyword>
<protein>
    <recommendedName>
        <fullName>Putative lysis protein S</fullName>
    </recommendedName>
    <alternativeName>
        <fullName>p11</fullName>
    </alternativeName>
</protein>
<comment type="function">
    <text evidence="1">Essential for lysis of the bacterial cell wall by disrupting the cell membrane, thereby giving hydrolytic enzymes access to the cell wall.</text>
</comment>
<comment type="similarity">
    <text evidence="2">Belongs to the lambda phage S protein family.</text>
</comment>
<organismHost>
    <name type="scientific">Escherichia coli</name>
    <dbReference type="NCBI Taxonomy" id="562"/>
</organismHost>